<feature type="chain" id="PRO_1000007452" description="Large ribosomal subunit protein uL29">
    <location>
        <begin position="1"/>
        <end position="69"/>
    </location>
</feature>
<name>RL29_CARHZ</name>
<evidence type="ECO:0000255" key="1">
    <source>
        <dbReference type="HAMAP-Rule" id="MF_00374"/>
    </source>
</evidence>
<evidence type="ECO:0000305" key="2"/>
<protein>
    <recommendedName>
        <fullName evidence="1">Large ribosomal subunit protein uL29</fullName>
    </recommendedName>
    <alternativeName>
        <fullName evidence="2">50S ribosomal protein L29</fullName>
    </alternativeName>
</protein>
<sequence>MKAKELRELTDAELVEKLASLKDELFKLRFQLSTGQLDNPSRIREVRRDIARVNTIIREREIARQKVEK</sequence>
<dbReference type="EMBL" id="CP000141">
    <property type="protein sequence ID" value="ABB14501.1"/>
    <property type="molecule type" value="Genomic_DNA"/>
</dbReference>
<dbReference type="RefSeq" id="WP_011345183.1">
    <property type="nucleotide sequence ID" value="NC_007503.1"/>
</dbReference>
<dbReference type="SMR" id="Q3A9S4"/>
<dbReference type="FunCoup" id="Q3A9S4">
    <property type="interactions" value="365"/>
</dbReference>
<dbReference type="STRING" id="246194.CHY_2301"/>
<dbReference type="KEGG" id="chy:CHY_2301"/>
<dbReference type="eggNOG" id="COG0255">
    <property type="taxonomic scope" value="Bacteria"/>
</dbReference>
<dbReference type="HOGENOM" id="CLU_158491_5_2_9"/>
<dbReference type="InParanoid" id="Q3A9S4"/>
<dbReference type="OrthoDB" id="9815192at2"/>
<dbReference type="Proteomes" id="UP000002706">
    <property type="component" value="Chromosome"/>
</dbReference>
<dbReference type="GO" id="GO:0022625">
    <property type="term" value="C:cytosolic large ribosomal subunit"/>
    <property type="evidence" value="ECO:0007669"/>
    <property type="project" value="TreeGrafter"/>
</dbReference>
<dbReference type="GO" id="GO:0003735">
    <property type="term" value="F:structural constituent of ribosome"/>
    <property type="evidence" value="ECO:0007669"/>
    <property type="project" value="InterPro"/>
</dbReference>
<dbReference type="GO" id="GO:0006412">
    <property type="term" value="P:translation"/>
    <property type="evidence" value="ECO:0007669"/>
    <property type="project" value="UniProtKB-UniRule"/>
</dbReference>
<dbReference type="CDD" id="cd00427">
    <property type="entry name" value="Ribosomal_L29_HIP"/>
    <property type="match status" value="1"/>
</dbReference>
<dbReference type="FunFam" id="1.10.287.310:FF:000001">
    <property type="entry name" value="50S ribosomal protein L29"/>
    <property type="match status" value="1"/>
</dbReference>
<dbReference type="Gene3D" id="1.10.287.310">
    <property type="match status" value="1"/>
</dbReference>
<dbReference type="HAMAP" id="MF_00374">
    <property type="entry name" value="Ribosomal_uL29"/>
    <property type="match status" value="1"/>
</dbReference>
<dbReference type="InterPro" id="IPR050063">
    <property type="entry name" value="Ribosomal_protein_uL29"/>
</dbReference>
<dbReference type="InterPro" id="IPR001854">
    <property type="entry name" value="Ribosomal_uL29"/>
</dbReference>
<dbReference type="InterPro" id="IPR018254">
    <property type="entry name" value="Ribosomal_uL29_CS"/>
</dbReference>
<dbReference type="InterPro" id="IPR036049">
    <property type="entry name" value="Ribosomal_uL29_sf"/>
</dbReference>
<dbReference type="NCBIfam" id="TIGR00012">
    <property type="entry name" value="L29"/>
    <property type="match status" value="1"/>
</dbReference>
<dbReference type="PANTHER" id="PTHR10916">
    <property type="entry name" value="60S RIBOSOMAL PROTEIN L35/50S RIBOSOMAL PROTEIN L29"/>
    <property type="match status" value="1"/>
</dbReference>
<dbReference type="PANTHER" id="PTHR10916:SF0">
    <property type="entry name" value="LARGE RIBOSOMAL SUBUNIT PROTEIN UL29C"/>
    <property type="match status" value="1"/>
</dbReference>
<dbReference type="Pfam" id="PF00831">
    <property type="entry name" value="Ribosomal_L29"/>
    <property type="match status" value="1"/>
</dbReference>
<dbReference type="SUPFAM" id="SSF46561">
    <property type="entry name" value="Ribosomal protein L29 (L29p)"/>
    <property type="match status" value="1"/>
</dbReference>
<dbReference type="PROSITE" id="PS00579">
    <property type="entry name" value="RIBOSOMAL_L29"/>
    <property type="match status" value="1"/>
</dbReference>
<comment type="similarity">
    <text evidence="1">Belongs to the universal ribosomal protein uL29 family.</text>
</comment>
<keyword id="KW-1185">Reference proteome</keyword>
<keyword id="KW-0687">Ribonucleoprotein</keyword>
<keyword id="KW-0689">Ribosomal protein</keyword>
<accession>Q3A9S4</accession>
<organism>
    <name type="scientific">Carboxydothermus hydrogenoformans (strain ATCC BAA-161 / DSM 6008 / Z-2901)</name>
    <dbReference type="NCBI Taxonomy" id="246194"/>
    <lineage>
        <taxon>Bacteria</taxon>
        <taxon>Bacillati</taxon>
        <taxon>Bacillota</taxon>
        <taxon>Clostridia</taxon>
        <taxon>Thermoanaerobacterales</taxon>
        <taxon>Thermoanaerobacteraceae</taxon>
        <taxon>Carboxydothermus</taxon>
    </lineage>
</organism>
<reference key="1">
    <citation type="journal article" date="2005" name="PLoS Genet.">
        <title>Life in hot carbon monoxide: the complete genome sequence of Carboxydothermus hydrogenoformans Z-2901.</title>
        <authorList>
            <person name="Wu M."/>
            <person name="Ren Q."/>
            <person name="Durkin A.S."/>
            <person name="Daugherty S.C."/>
            <person name="Brinkac L.M."/>
            <person name="Dodson R.J."/>
            <person name="Madupu R."/>
            <person name="Sullivan S.A."/>
            <person name="Kolonay J.F."/>
            <person name="Nelson W.C."/>
            <person name="Tallon L.J."/>
            <person name="Jones K.M."/>
            <person name="Ulrich L.E."/>
            <person name="Gonzalez J.M."/>
            <person name="Zhulin I.B."/>
            <person name="Robb F.T."/>
            <person name="Eisen J.A."/>
        </authorList>
    </citation>
    <scope>NUCLEOTIDE SEQUENCE [LARGE SCALE GENOMIC DNA]</scope>
    <source>
        <strain>ATCC BAA-161 / DSM 6008 / Z-2901</strain>
    </source>
</reference>
<proteinExistence type="inferred from homology"/>
<gene>
    <name evidence="1" type="primary">rpmC</name>
    <name type="ordered locus">CHY_2301</name>
</gene>